<name>DFX_ARCFU</name>
<dbReference type="EMBL" id="AE000782">
    <property type="protein sequence ID" value="AAB90417.1"/>
    <property type="molecule type" value="Genomic_DNA"/>
</dbReference>
<dbReference type="PIR" id="A69354">
    <property type="entry name" value="A69354"/>
</dbReference>
<dbReference type="SMR" id="O29425"/>
<dbReference type="STRING" id="224325.AF_0833"/>
<dbReference type="PaxDb" id="224325-AF_0833"/>
<dbReference type="EnsemblBacteria" id="AAB90417">
    <property type="protein sequence ID" value="AAB90417"/>
    <property type="gene ID" value="AF_0833"/>
</dbReference>
<dbReference type="KEGG" id="afu:AF_0833"/>
<dbReference type="eggNOG" id="arCOG02146">
    <property type="taxonomic scope" value="Archaea"/>
</dbReference>
<dbReference type="HOGENOM" id="CLU_118960_1_0_2"/>
<dbReference type="OrthoDB" id="30725at2157"/>
<dbReference type="PhylomeDB" id="O29425"/>
<dbReference type="Proteomes" id="UP000002199">
    <property type="component" value="Chromosome"/>
</dbReference>
<dbReference type="GO" id="GO:0005506">
    <property type="term" value="F:iron ion binding"/>
    <property type="evidence" value="ECO:0007669"/>
    <property type="project" value="InterPro"/>
</dbReference>
<dbReference type="GO" id="GO:0016491">
    <property type="term" value="F:oxidoreductase activity"/>
    <property type="evidence" value="ECO:0007669"/>
    <property type="project" value="InterPro"/>
</dbReference>
<dbReference type="GO" id="GO:0019430">
    <property type="term" value="P:removal of superoxide radicals"/>
    <property type="evidence" value="ECO:0007669"/>
    <property type="project" value="InterPro"/>
</dbReference>
<dbReference type="CDD" id="cd00974">
    <property type="entry name" value="DSRD"/>
    <property type="match status" value="1"/>
</dbReference>
<dbReference type="CDD" id="cd03171">
    <property type="entry name" value="SORL_Dfx_classI"/>
    <property type="match status" value="1"/>
</dbReference>
<dbReference type="Gene3D" id="2.20.28.100">
    <property type="entry name" value="Desulphoferrodoxin, N-terminal domain"/>
    <property type="match status" value="1"/>
</dbReference>
<dbReference type="Gene3D" id="2.60.40.730">
    <property type="entry name" value="SOR catalytic domain"/>
    <property type="match status" value="1"/>
</dbReference>
<dbReference type="InterPro" id="IPR002742">
    <property type="entry name" value="Desulfoferrodoxin_Fe-bd_dom"/>
</dbReference>
<dbReference type="InterPro" id="IPR036073">
    <property type="entry name" value="Desulfoferrodoxin_Fe-bd_dom_sf"/>
</dbReference>
<dbReference type="InterPro" id="IPR004462">
    <property type="entry name" value="Desulfoferrodoxin_N"/>
</dbReference>
<dbReference type="InterPro" id="IPR038094">
    <property type="entry name" value="Desulfoferrodoxin_N_sf"/>
</dbReference>
<dbReference type="InterPro" id="IPR004793">
    <property type="entry name" value="Desulfoferrodoxin_rbo"/>
</dbReference>
<dbReference type="InterPro" id="IPR051233">
    <property type="entry name" value="Desulfoferrodoxin_SOR"/>
</dbReference>
<dbReference type="NCBIfam" id="TIGR00319">
    <property type="entry name" value="desulf_FeS4"/>
    <property type="match status" value="1"/>
</dbReference>
<dbReference type="NCBIfam" id="TIGR00320">
    <property type="entry name" value="dfx_rbo"/>
    <property type="match status" value="1"/>
</dbReference>
<dbReference type="NCBIfam" id="TIGR00332">
    <property type="entry name" value="neela_ferrous"/>
    <property type="match status" value="1"/>
</dbReference>
<dbReference type="PANTHER" id="PTHR36541">
    <property type="entry name" value="SUPEROXIDE REDUCTASE-RELATED"/>
    <property type="match status" value="1"/>
</dbReference>
<dbReference type="PANTHER" id="PTHR36541:SF1">
    <property type="entry name" value="SUPEROXIDE REDUCTASE-RELATED"/>
    <property type="match status" value="1"/>
</dbReference>
<dbReference type="Pfam" id="PF06397">
    <property type="entry name" value="Desulfoferrod_N"/>
    <property type="match status" value="1"/>
</dbReference>
<dbReference type="Pfam" id="PF01880">
    <property type="entry name" value="Desulfoferrodox"/>
    <property type="match status" value="1"/>
</dbReference>
<dbReference type="SUPFAM" id="SSF57802">
    <property type="entry name" value="Rubredoxin-like"/>
    <property type="match status" value="1"/>
</dbReference>
<dbReference type="SUPFAM" id="SSF49367">
    <property type="entry name" value="Superoxide reductase-like"/>
    <property type="match status" value="1"/>
</dbReference>
<comment type="cofactor">
    <cofactor evidence="1">
        <name>Fe(3+)</name>
        <dbReference type="ChEBI" id="CHEBI:29034"/>
    </cofactor>
    <text evidence="1">Binds 1 Fe(3+) ion per subunit. The iron ion 1 is coordinated via 4 cysteine residues.</text>
</comment>
<comment type="cofactor">
    <cofactor evidence="1">
        <name>Cu(2+)</name>
        <dbReference type="ChEBI" id="CHEBI:29036"/>
    </cofactor>
    <text evidence="1">Binds 1 Fe(2+) ion per subunit. The iron ion 2 is coordinated via four histidines and one cysteine residue.</text>
</comment>
<comment type="similarity">
    <text evidence="2">Belongs to the desulfoferrodoxin family.</text>
</comment>
<evidence type="ECO:0000250" key="1"/>
<evidence type="ECO:0000305" key="2"/>
<reference key="1">
    <citation type="journal article" date="1997" name="Nature">
        <title>The complete genome sequence of the hyperthermophilic, sulphate-reducing archaeon Archaeoglobus fulgidus.</title>
        <authorList>
            <person name="Klenk H.-P."/>
            <person name="Clayton R.A."/>
            <person name="Tomb J.-F."/>
            <person name="White O."/>
            <person name="Nelson K.E."/>
            <person name="Ketchum K.A."/>
            <person name="Dodson R.J."/>
            <person name="Gwinn M.L."/>
            <person name="Hickey E.K."/>
            <person name="Peterson J.D."/>
            <person name="Richardson D.L."/>
            <person name="Kerlavage A.R."/>
            <person name="Graham D.E."/>
            <person name="Kyrpides N.C."/>
            <person name="Fleischmann R.D."/>
            <person name="Quackenbush J."/>
            <person name="Lee N.H."/>
            <person name="Sutton G.G."/>
            <person name="Gill S.R."/>
            <person name="Kirkness E.F."/>
            <person name="Dougherty B.A."/>
            <person name="McKenney K."/>
            <person name="Adams M.D."/>
            <person name="Loftus B.J."/>
            <person name="Peterson S.N."/>
            <person name="Reich C.I."/>
            <person name="McNeil L.K."/>
            <person name="Badger J.H."/>
            <person name="Glodek A."/>
            <person name="Zhou L."/>
            <person name="Overbeek R."/>
            <person name="Gocayne J.D."/>
            <person name="Weidman J.F."/>
            <person name="McDonald L.A."/>
            <person name="Utterback T.R."/>
            <person name="Cotton M.D."/>
            <person name="Spriggs T."/>
            <person name="Artiach P."/>
            <person name="Kaine B.P."/>
            <person name="Sykes S.M."/>
            <person name="Sadow P.W."/>
            <person name="D'Andrea K.P."/>
            <person name="Bowman C."/>
            <person name="Fujii C."/>
            <person name="Garland S.A."/>
            <person name="Mason T.M."/>
            <person name="Olsen G.J."/>
            <person name="Fraser C.M."/>
            <person name="Smith H.O."/>
            <person name="Woese C.R."/>
            <person name="Venter J.C."/>
        </authorList>
    </citation>
    <scope>NUCLEOTIDE SEQUENCE [LARGE SCALE GENOMIC DNA]</scope>
    <source>
        <strain>ATCC 49558 / DSM 4304 / JCM 9628 / NBRC 100126 / VC-16</strain>
    </source>
</reference>
<gene>
    <name type="ordered locus">AF_0833</name>
</gene>
<proteinExistence type="inferred from homology"/>
<keyword id="KW-0249">Electron transport</keyword>
<keyword id="KW-0408">Iron</keyword>
<keyword id="KW-0479">Metal-binding</keyword>
<keyword id="KW-1185">Reference proteome</keyword>
<keyword id="KW-0813">Transport</keyword>
<protein>
    <recommendedName>
        <fullName>Desulfoferrodoxin homolog</fullName>
        <shortName>Dfx</shortName>
    </recommendedName>
</protein>
<organism>
    <name type="scientific">Archaeoglobus fulgidus (strain ATCC 49558 / DSM 4304 / JCM 9628 / NBRC 100126 / VC-16)</name>
    <dbReference type="NCBI Taxonomy" id="224325"/>
    <lineage>
        <taxon>Archaea</taxon>
        <taxon>Methanobacteriati</taxon>
        <taxon>Methanobacteriota</taxon>
        <taxon>Archaeoglobi</taxon>
        <taxon>Archaeoglobales</taxon>
        <taxon>Archaeoglobaceae</taxon>
        <taxon>Archaeoglobus</taxon>
    </lineage>
</organism>
<accession>O29425</accession>
<feature type="chain" id="PRO_0000140867" description="Desulfoferrodoxin homolog">
    <location>
        <begin position="1"/>
        <end position="125"/>
    </location>
</feature>
<feature type="binding site" evidence="1">
    <location>
        <position position="10"/>
    </location>
    <ligand>
        <name>Fe cation</name>
        <dbReference type="ChEBI" id="CHEBI:24875"/>
        <label>1</label>
    </ligand>
</feature>
<feature type="binding site" evidence="1">
    <location>
        <position position="13"/>
    </location>
    <ligand>
        <name>Fe cation</name>
        <dbReference type="ChEBI" id="CHEBI:24875"/>
        <label>1</label>
    </ligand>
</feature>
<feature type="binding site" evidence="1">
    <location>
        <position position="29"/>
    </location>
    <ligand>
        <name>Fe cation</name>
        <dbReference type="ChEBI" id="CHEBI:24875"/>
        <label>1</label>
    </ligand>
</feature>
<feature type="binding site" evidence="1">
    <location>
        <position position="30"/>
    </location>
    <ligand>
        <name>Fe cation</name>
        <dbReference type="ChEBI" id="CHEBI:24875"/>
        <label>1</label>
    </ligand>
</feature>
<feature type="binding site" evidence="1">
    <location>
        <position position="49"/>
    </location>
    <ligand>
        <name>Fe cation</name>
        <dbReference type="ChEBI" id="CHEBI:24875"/>
        <label>2</label>
    </ligand>
</feature>
<feature type="binding site" evidence="1">
    <location>
        <position position="69"/>
    </location>
    <ligand>
        <name>Fe cation</name>
        <dbReference type="ChEBI" id="CHEBI:24875"/>
        <label>2</label>
    </ligand>
</feature>
<feature type="binding site" evidence="1">
    <location>
        <position position="75"/>
    </location>
    <ligand>
        <name>Fe cation</name>
        <dbReference type="ChEBI" id="CHEBI:24875"/>
        <label>2</label>
    </ligand>
</feature>
<feature type="binding site" evidence="1">
    <location>
        <position position="116"/>
    </location>
    <ligand>
        <name>Fe cation</name>
        <dbReference type="ChEBI" id="CHEBI:24875"/>
        <label>2</label>
    </ligand>
</feature>
<feature type="binding site" evidence="1">
    <location>
        <position position="119"/>
    </location>
    <ligand>
        <name>Fe cation</name>
        <dbReference type="ChEBI" id="CHEBI:24875"/>
        <label>2</label>
    </ligand>
</feature>
<sequence>MTEVMQVYKCMVCGNIVEVVHAGRGQLVCCGQPMKLMEVKTTDEGKEKHVPVIEREGNKVYVKVGSVAHPMEEQHYIEWIEVIDDGCVHRKQLKPGDEPKAEFTVMSDRVSARAYCNIHGLWQSG</sequence>